<gene>
    <name evidence="1" type="primary">lpxD</name>
    <name type="ordered locus">Minf_0748</name>
</gene>
<protein>
    <recommendedName>
        <fullName evidence="1">UDP-3-O-acylglucosamine N-acyltransferase</fullName>
        <ecNumber evidence="1">2.3.1.191</ecNumber>
    </recommendedName>
</protein>
<proteinExistence type="inferred from homology"/>
<reference key="1">
    <citation type="journal article" date="2008" name="Biol. Direct">
        <title>Complete genome sequence of the extremely acidophilic methanotroph isolate V4, Methylacidiphilum infernorum, a representative of the bacterial phylum Verrucomicrobia.</title>
        <authorList>
            <person name="Hou S."/>
            <person name="Makarova K.S."/>
            <person name="Saw J.H."/>
            <person name="Senin P."/>
            <person name="Ly B.V."/>
            <person name="Zhou Z."/>
            <person name="Ren Y."/>
            <person name="Wang J."/>
            <person name="Galperin M.Y."/>
            <person name="Omelchenko M.V."/>
            <person name="Wolf Y.I."/>
            <person name="Yutin N."/>
            <person name="Koonin E.V."/>
            <person name="Stott M.B."/>
            <person name="Mountain B.W."/>
            <person name="Crowe M.A."/>
            <person name="Smirnova A.V."/>
            <person name="Dunfield P.F."/>
            <person name="Feng L."/>
            <person name="Wang L."/>
            <person name="Alam M."/>
        </authorList>
    </citation>
    <scope>NUCLEOTIDE SEQUENCE [LARGE SCALE GENOMIC DNA]</scope>
    <source>
        <strain>Isolate V4</strain>
    </source>
</reference>
<name>LPXD_METI4</name>
<accession>B3E0P9</accession>
<evidence type="ECO:0000255" key="1">
    <source>
        <dbReference type="HAMAP-Rule" id="MF_00523"/>
    </source>
</evidence>
<dbReference type="EC" id="2.3.1.191" evidence="1"/>
<dbReference type="EMBL" id="CP000975">
    <property type="protein sequence ID" value="ACD82803.1"/>
    <property type="molecule type" value="Genomic_DNA"/>
</dbReference>
<dbReference type="RefSeq" id="WP_012463085.1">
    <property type="nucleotide sequence ID" value="NC_010794.1"/>
</dbReference>
<dbReference type="SMR" id="B3E0P9"/>
<dbReference type="STRING" id="481448.Minf_0748"/>
<dbReference type="KEGG" id="min:Minf_0748"/>
<dbReference type="eggNOG" id="COG1044">
    <property type="taxonomic scope" value="Bacteria"/>
</dbReference>
<dbReference type="HOGENOM" id="CLU_049865_0_0_0"/>
<dbReference type="OrthoDB" id="9784739at2"/>
<dbReference type="UniPathway" id="UPA00973"/>
<dbReference type="Proteomes" id="UP000009149">
    <property type="component" value="Chromosome"/>
</dbReference>
<dbReference type="GO" id="GO:0016020">
    <property type="term" value="C:membrane"/>
    <property type="evidence" value="ECO:0007669"/>
    <property type="project" value="GOC"/>
</dbReference>
<dbReference type="GO" id="GO:0016410">
    <property type="term" value="F:N-acyltransferase activity"/>
    <property type="evidence" value="ECO:0007669"/>
    <property type="project" value="InterPro"/>
</dbReference>
<dbReference type="GO" id="GO:0009245">
    <property type="term" value="P:lipid A biosynthetic process"/>
    <property type="evidence" value="ECO:0007669"/>
    <property type="project" value="UniProtKB-UniRule"/>
</dbReference>
<dbReference type="CDD" id="cd03352">
    <property type="entry name" value="LbH_LpxD"/>
    <property type="match status" value="1"/>
</dbReference>
<dbReference type="Gene3D" id="2.160.10.10">
    <property type="entry name" value="Hexapeptide repeat proteins"/>
    <property type="match status" value="1"/>
</dbReference>
<dbReference type="Gene3D" id="3.40.1390.10">
    <property type="entry name" value="MurE/MurF, N-terminal domain"/>
    <property type="match status" value="1"/>
</dbReference>
<dbReference type="HAMAP" id="MF_00523">
    <property type="entry name" value="LpxD"/>
    <property type="match status" value="1"/>
</dbReference>
<dbReference type="InterPro" id="IPR001451">
    <property type="entry name" value="Hexapep"/>
</dbReference>
<dbReference type="InterPro" id="IPR007691">
    <property type="entry name" value="LpxD"/>
</dbReference>
<dbReference type="InterPro" id="IPR011004">
    <property type="entry name" value="Trimer_LpxA-like_sf"/>
</dbReference>
<dbReference type="InterPro" id="IPR020573">
    <property type="entry name" value="UDP_GlcNAc_AcTrfase_non-rep"/>
</dbReference>
<dbReference type="NCBIfam" id="TIGR01853">
    <property type="entry name" value="lipid_A_lpxD"/>
    <property type="match status" value="1"/>
</dbReference>
<dbReference type="NCBIfam" id="NF002060">
    <property type="entry name" value="PRK00892.1"/>
    <property type="match status" value="1"/>
</dbReference>
<dbReference type="PANTHER" id="PTHR43378">
    <property type="entry name" value="UDP-3-O-ACYLGLUCOSAMINE N-ACYLTRANSFERASE"/>
    <property type="match status" value="1"/>
</dbReference>
<dbReference type="PANTHER" id="PTHR43378:SF2">
    <property type="entry name" value="UDP-3-O-ACYLGLUCOSAMINE N-ACYLTRANSFERASE 1, MITOCHONDRIAL-RELATED"/>
    <property type="match status" value="1"/>
</dbReference>
<dbReference type="Pfam" id="PF00132">
    <property type="entry name" value="Hexapep"/>
    <property type="match status" value="2"/>
</dbReference>
<dbReference type="Pfam" id="PF04613">
    <property type="entry name" value="LpxD"/>
    <property type="match status" value="1"/>
</dbReference>
<dbReference type="SUPFAM" id="SSF51161">
    <property type="entry name" value="Trimeric LpxA-like enzymes"/>
    <property type="match status" value="1"/>
</dbReference>
<organism>
    <name type="scientific">Methylacidiphilum infernorum (isolate V4)</name>
    <name type="common">Methylokorus infernorum (strain V4)</name>
    <dbReference type="NCBI Taxonomy" id="481448"/>
    <lineage>
        <taxon>Bacteria</taxon>
        <taxon>Pseudomonadati</taxon>
        <taxon>Verrucomicrobiota</taxon>
        <taxon>Methylacidiphilae</taxon>
        <taxon>Methylacidiphilales</taxon>
        <taxon>Methylacidiphilaceae</taxon>
        <taxon>Methylacidiphilum (ex Ratnadevi et al. 2023)</taxon>
    </lineage>
</organism>
<sequence length="351" mass="37997">MISYSVKQLASLVGGIVEGEPEIEITGISDILDAKKGQITFLSNPRYEAAVEKTQASAIVVSKSYKSSSPITLIRVDSPSLAFSQIISLFSPQPFSYEPGIHPTALIGREVEIGKEVSIQPYAVIEDKVKIGDGCVIGAYVFIGRESIIGEKSFFYPHVTIRERSRIGKRVILHPGAVIGSDGFGYEQTNGRHEKIPQVGIVQIDDDVEIGANTTVDRGRFGKTWIQEGCKIDNLVQIAHNVIIGKNSIIAAQTGISGSTSLGEHVTLAGQVGIAGHIHIGDGATITAQSGVTKDVPPRAVLSGRHARPINLTHKLEVLYNKLPELWERLKKLEKKYDGDSPRPEADPYNS</sequence>
<keyword id="KW-0012">Acyltransferase</keyword>
<keyword id="KW-0441">Lipid A biosynthesis</keyword>
<keyword id="KW-0444">Lipid biosynthesis</keyword>
<keyword id="KW-0443">Lipid metabolism</keyword>
<keyword id="KW-0677">Repeat</keyword>
<keyword id="KW-0808">Transferase</keyword>
<feature type="chain" id="PRO_1000127684" description="UDP-3-O-acylglucosamine N-acyltransferase">
    <location>
        <begin position="1"/>
        <end position="351"/>
    </location>
</feature>
<feature type="active site" description="Proton acceptor" evidence="1">
    <location>
        <position position="240"/>
    </location>
</feature>
<comment type="function">
    <text evidence="1">Catalyzes the N-acylation of UDP-3-O-acylglucosamine using 3-hydroxyacyl-ACP as the acyl donor. Is involved in the biosynthesis of lipid A, a phosphorylated glycolipid that anchors the lipopolysaccharide to the outer membrane of the cell.</text>
</comment>
<comment type="catalytic activity">
    <reaction evidence="1">
        <text>a UDP-3-O-[(3R)-3-hydroxyacyl]-alpha-D-glucosamine + a (3R)-hydroxyacyl-[ACP] = a UDP-2-N,3-O-bis[(3R)-3-hydroxyacyl]-alpha-D-glucosamine + holo-[ACP] + H(+)</text>
        <dbReference type="Rhea" id="RHEA:53836"/>
        <dbReference type="Rhea" id="RHEA-COMP:9685"/>
        <dbReference type="Rhea" id="RHEA-COMP:9945"/>
        <dbReference type="ChEBI" id="CHEBI:15378"/>
        <dbReference type="ChEBI" id="CHEBI:64479"/>
        <dbReference type="ChEBI" id="CHEBI:78827"/>
        <dbReference type="ChEBI" id="CHEBI:137740"/>
        <dbReference type="ChEBI" id="CHEBI:137748"/>
        <dbReference type="EC" id="2.3.1.191"/>
    </reaction>
</comment>
<comment type="pathway">
    <text evidence="1">Bacterial outer membrane biogenesis; LPS lipid A biosynthesis.</text>
</comment>
<comment type="subunit">
    <text evidence="1">Homotrimer.</text>
</comment>
<comment type="similarity">
    <text evidence="1">Belongs to the transferase hexapeptide repeat family. LpxD subfamily.</text>
</comment>